<comment type="function">
    <text evidence="1">Involved in mRNA degradation. Catalyzes the phosphorolysis of single-stranded polyribonucleotides processively in the 3'- to 5'-direction.</text>
</comment>
<comment type="catalytic activity">
    <reaction evidence="1">
        <text>RNA(n+1) + phosphate = RNA(n) + a ribonucleoside 5'-diphosphate</text>
        <dbReference type="Rhea" id="RHEA:22096"/>
        <dbReference type="Rhea" id="RHEA-COMP:14527"/>
        <dbReference type="Rhea" id="RHEA-COMP:17342"/>
        <dbReference type="ChEBI" id="CHEBI:43474"/>
        <dbReference type="ChEBI" id="CHEBI:57930"/>
        <dbReference type="ChEBI" id="CHEBI:140395"/>
        <dbReference type="EC" id="2.7.7.8"/>
    </reaction>
</comment>
<comment type="cofactor">
    <cofactor evidence="1">
        <name>Mg(2+)</name>
        <dbReference type="ChEBI" id="CHEBI:18420"/>
    </cofactor>
</comment>
<comment type="subcellular location">
    <subcellularLocation>
        <location evidence="1">Cytoplasm</location>
    </subcellularLocation>
</comment>
<comment type="similarity">
    <text evidence="1">Belongs to the polyribonucleotide nucleotidyltransferase family.</text>
</comment>
<keyword id="KW-0963">Cytoplasm</keyword>
<keyword id="KW-0460">Magnesium</keyword>
<keyword id="KW-0479">Metal-binding</keyword>
<keyword id="KW-0548">Nucleotidyltransferase</keyword>
<keyword id="KW-1185">Reference proteome</keyword>
<keyword id="KW-0694">RNA-binding</keyword>
<keyword id="KW-0808">Transferase</keyword>
<protein>
    <recommendedName>
        <fullName evidence="1">Polyribonucleotide nucleotidyltransferase</fullName>
        <ecNumber evidence="1">2.7.7.8</ecNumber>
    </recommendedName>
    <alternativeName>
        <fullName evidence="1">Polynucleotide phosphorylase</fullName>
        <shortName evidence="1">PNPase</shortName>
    </alternativeName>
</protein>
<evidence type="ECO:0000255" key="1">
    <source>
        <dbReference type="HAMAP-Rule" id="MF_01595"/>
    </source>
</evidence>
<reference key="1">
    <citation type="journal article" date="2002" name="Nucleic Acids Res.">
        <title>Genome sequence of Oceanobacillus iheyensis isolated from the Iheya Ridge and its unexpected adaptive capabilities to extreme environments.</title>
        <authorList>
            <person name="Takami H."/>
            <person name="Takaki Y."/>
            <person name="Uchiyama I."/>
        </authorList>
    </citation>
    <scope>NUCLEOTIDE SEQUENCE [LARGE SCALE GENOMIC DNA]</scope>
    <source>
        <strain>DSM 14371 / CIP 107618 / JCM 11309 / KCTC 3954 / HTE831</strain>
    </source>
</reference>
<gene>
    <name evidence="1" type="primary">pnp</name>
    <name type="ordered locus">OB1604</name>
</gene>
<organism>
    <name type="scientific">Oceanobacillus iheyensis (strain DSM 14371 / CIP 107618 / JCM 11309 / KCTC 3954 / HTE831)</name>
    <dbReference type="NCBI Taxonomy" id="221109"/>
    <lineage>
        <taxon>Bacteria</taxon>
        <taxon>Bacillati</taxon>
        <taxon>Bacillota</taxon>
        <taxon>Bacilli</taxon>
        <taxon>Bacillales</taxon>
        <taxon>Bacillaceae</taxon>
        <taxon>Oceanobacillus</taxon>
    </lineage>
</organism>
<sequence>MAEEKQLFSTEISGKKFTVEVGELAKQANGACMIHYGDTSVLSVATASSEPKDLPFFPLTVNYEERLYAVGKIPGGFIKREGRPSEKAILSSRLIDRPIRPLFPDGFRNEVQVISTVMSVDQDCPSEIAAMIGSSIALSVSDIPFEQPIAGVNVGRVDGEFIINPTIEQEAKSDIELTVAGTKDAINMVEAGANEVPEDIMLEAIMFGHEEIKRLVAFQEELVKACGQDKFDVVLAESEEELVENVHSEAKDKIVNAIQVQEKHARDEAIKQAKNEIVAHYEEQEVEEDVIKQVKSILDSMVKEEVRRLITKEKIRPDGRKVDEIRPLSSRIHVLPRTHGSGLFTRGQTQALSVCTLGALGDVQILDGLDLEESKRFMHHYNFPQYSVGETGPIRGPGRREIGHGALGERALEKVIPDDKEFPYTIRLVSEVLESNGSTSQASICASTLAMMDAGVPIKAPVAGIAMGLVKSGDDYTILTDIQGMEDALGDMDFKVAGTANGVTALQMDIKIDGLSRDILEEALSQAKKGRMQILDSMLATIKEPKEELSEFAPKILTMAIEPDKIRDVIGPSGKQINQIIDETGVKIDIEQDGSIFISSTDNEMNKKAKQIIEDLVREVEVGQIYLGKVKRIEKFGAFVELFKGKDGLVHISELAEERTNKVEDVVSIDDQIMVKVKEIDRQGRVNLSRKAVIQDEKKAKEQAK</sequence>
<proteinExistence type="inferred from homology"/>
<dbReference type="EC" id="2.7.7.8" evidence="1"/>
<dbReference type="EMBL" id="BA000028">
    <property type="protein sequence ID" value="BAC13560.1"/>
    <property type="molecule type" value="Genomic_DNA"/>
</dbReference>
<dbReference type="RefSeq" id="WP_011066004.1">
    <property type="nucleotide sequence ID" value="NC_004193.1"/>
</dbReference>
<dbReference type="SMR" id="Q8EQT7"/>
<dbReference type="STRING" id="221109.gene:10733844"/>
<dbReference type="KEGG" id="oih:OB1604"/>
<dbReference type="eggNOG" id="COG1185">
    <property type="taxonomic scope" value="Bacteria"/>
</dbReference>
<dbReference type="HOGENOM" id="CLU_004217_2_2_9"/>
<dbReference type="OrthoDB" id="9804305at2"/>
<dbReference type="PhylomeDB" id="Q8EQT7"/>
<dbReference type="Proteomes" id="UP000000822">
    <property type="component" value="Chromosome"/>
</dbReference>
<dbReference type="GO" id="GO:0005829">
    <property type="term" value="C:cytosol"/>
    <property type="evidence" value="ECO:0007669"/>
    <property type="project" value="TreeGrafter"/>
</dbReference>
<dbReference type="GO" id="GO:0000175">
    <property type="term" value="F:3'-5'-RNA exonuclease activity"/>
    <property type="evidence" value="ECO:0007669"/>
    <property type="project" value="TreeGrafter"/>
</dbReference>
<dbReference type="GO" id="GO:0000287">
    <property type="term" value="F:magnesium ion binding"/>
    <property type="evidence" value="ECO:0007669"/>
    <property type="project" value="UniProtKB-UniRule"/>
</dbReference>
<dbReference type="GO" id="GO:0004654">
    <property type="term" value="F:polyribonucleotide nucleotidyltransferase activity"/>
    <property type="evidence" value="ECO:0007669"/>
    <property type="project" value="UniProtKB-UniRule"/>
</dbReference>
<dbReference type="GO" id="GO:0003723">
    <property type="term" value="F:RNA binding"/>
    <property type="evidence" value="ECO:0007669"/>
    <property type="project" value="UniProtKB-UniRule"/>
</dbReference>
<dbReference type="GO" id="GO:0006402">
    <property type="term" value="P:mRNA catabolic process"/>
    <property type="evidence" value="ECO:0007669"/>
    <property type="project" value="UniProtKB-UniRule"/>
</dbReference>
<dbReference type="GO" id="GO:0006396">
    <property type="term" value="P:RNA processing"/>
    <property type="evidence" value="ECO:0007669"/>
    <property type="project" value="InterPro"/>
</dbReference>
<dbReference type="CDD" id="cd02393">
    <property type="entry name" value="KH-I_PNPase"/>
    <property type="match status" value="1"/>
</dbReference>
<dbReference type="CDD" id="cd11363">
    <property type="entry name" value="RNase_PH_PNPase_1"/>
    <property type="match status" value="1"/>
</dbReference>
<dbReference type="CDD" id="cd11364">
    <property type="entry name" value="RNase_PH_PNPase_2"/>
    <property type="match status" value="1"/>
</dbReference>
<dbReference type="CDD" id="cd04472">
    <property type="entry name" value="S1_PNPase"/>
    <property type="match status" value="1"/>
</dbReference>
<dbReference type="FunFam" id="2.40.50.140:FF:000023">
    <property type="entry name" value="Polyribonucleotide nucleotidyltransferase"/>
    <property type="match status" value="1"/>
</dbReference>
<dbReference type="FunFam" id="3.30.1370.10:FF:000001">
    <property type="entry name" value="Polyribonucleotide nucleotidyltransferase"/>
    <property type="match status" value="1"/>
</dbReference>
<dbReference type="FunFam" id="3.30.230.70:FF:000001">
    <property type="entry name" value="Polyribonucleotide nucleotidyltransferase"/>
    <property type="match status" value="1"/>
</dbReference>
<dbReference type="FunFam" id="3.30.230.70:FF:000002">
    <property type="entry name" value="Polyribonucleotide nucleotidyltransferase"/>
    <property type="match status" value="1"/>
</dbReference>
<dbReference type="Gene3D" id="3.30.230.70">
    <property type="entry name" value="GHMP Kinase, N-terminal domain"/>
    <property type="match status" value="2"/>
</dbReference>
<dbReference type="Gene3D" id="3.30.1370.10">
    <property type="entry name" value="K Homology domain, type 1"/>
    <property type="match status" value="1"/>
</dbReference>
<dbReference type="Gene3D" id="2.40.50.140">
    <property type="entry name" value="Nucleic acid-binding proteins"/>
    <property type="match status" value="1"/>
</dbReference>
<dbReference type="HAMAP" id="MF_01595">
    <property type="entry name" value="PNPase"/>
    <property type="match status" value="1"/>
</dbReference>
<dbReference type="InterPro" id="IPR001247">
    <property type="entry name" value="ExoRNase_PH_dom1"/>
</dbReference>
<dbReference type="InterPro" id="IPR015847">
    <property type="entry name" value="ExoRNase_PH_dom2"/>
</dbReference>
<dbReference type="InterPro" id="IPR036345">
    <property type="entry name" value="ExoRNase_PH_dom2_sf"/>
</dbReference>
<dbReference type="InterPro" id="IPR004087">
    <property type="entry name" value="KH_dom"/>
</dbReference>
<dbReference type="InterPro" id="IPR004088">
    <property type="entry name" value="KH_dom_type_1"/>
</dbReference>
<dbReference type="InterPro" id="IPR036612">
    <property type="entry name" value="KH_dom_type_1_sf"/>
</dbReference>
<dbReference type="InterPro" id="IPR012340">
    <property type="entry name" value="NA-bd_OB-fold"/>
</dbReference>
<dbReference type="InterPro" id="IPR012162">
    <property type="entry name" value="PNPase"/>
</dbReference>
<dbReference type="InterPro" id="IPR027408">
    <property type="entry name" value="PNPase/RNase_PH_dom_sf"/>
</dbReference>
<dbReference type="InterPro" id="IPR015848">
    <property type="entry name" value="PNPase_PH_RNA-bd_bac/org-type"/>
</dbReference>
<dbReference type="InterPro" id="IPR020568">
    <property type="entry name" value="Ribosomal_Su5_D2-typ_SF"/>
</dbReference>
<dbReference type="InterPro" id="IPR003029">
    <property type="entry name" value="S1_domain"/>
</dbReference>
<dbReference type="NCBIfam" id="TIGR03591">
    <property type="entry name" value="polynuc_phos"/>
    <property type="match status" value="1"/>
</dbReference>
<dbReference type="NCBIfam" id="NF008805">
    <property type="entry name" value="PRK11824.1"/>
    <property type="match status" value="1"/>
</dbReference>
<dbReference type="PANTHER" id="PTHR11252">
    <property type="entry name" value="POLYRIBONUCLEOTIDE NUCLEOTIDYLTRANSFERASE"/>
    <property type="match status" value="1"/>
</dbReference>
<dbReference type="PANTHER" id="PTHR11252:SF0">
    <property type="entry name" value="POLYRIBONUCLEOTIDE NUCLEOTIDYLTRANSFERASE 1, MITOCHONDRIAL"/>
    <property type="match status" value="1"/>
</dbReference>
<dbReference type="Pfam" id="PF00013">
    <property type="entry name" value="KH_1"/>
    <property type="match status" value="1"/>
</dbReference>
<dbReference type="Pfam" id="PF03726">
    <property type="entry name" value="PNPase"/>
    <property type="match status" value="1"/>
</dbReference>
<dbReference type="Pfam" id="PF01138">
    <property type="entry name" value="RNase_PH"/>
    <property type="match status" value="2"/>
</dbReference>
<dbReference type="Pfam" id="PF03725">
    <property type="entry name" value="RNase_PH_C"/>
    <property type="match status" value="2"/>
</dbReference>
<dbReference type="Pfam" id="PF00575">
    <property type="entry name" value="S1"/>
    <property type="match status" value="1"/>
</dbReference>
<dbReference type="PIRSF" id="PIRSF005499">
    <property type="entry name" value="PNPase"/>
    <property type="match status" value="1"/>
</dbReference>
<dbReference type="SMART" id="SM00322">
    <property type="entry name" value="KH"/>
    <property type="match status" value="1"/>
</dbReference>
<dbReference type="SMART" id="SM00316">
    <property type="entry name" value="S1"/>
    <property type="match status" value="1"/>
</dbReference>
<dbReference type="SUPFAM" id="SSF54791">
    <property type="entry name" value="Eukaryotic type KH-domain (KH-domain type I)"/>
    <property type="match status" value="1"/>
</dbReference>
<dbReference type="SUPFAM" id="SSF50249">
    <property type="entry name" value="Nucleic acid-binding proteins"/>
    <property type="match status" value="1"/>
</dbReference>
<dbReference type="SUPFAM" id="SSF55666">
    <property type="entry name" value="Ribonuclease PH domain 2-like"/>
    <property type="match status" value="2"/>
</dbReference>
<dbReference type="SUPFAM" id="SSF54211">
    <property type="entry name" value="Ribosomal protein S5 domain 2-like"/>
    <property type="match status" value="2"/>
</dbReference>
<dbReference type="PROSITE" id="PS50084">
    <property type="entry name" value="KH_TYPE_1"/>
    <property type="match status" value="1"/>
</dbReference>
<dbReference type="PROSITE" id="PS50126">
    <property type="entry name" value="S1"/>
    <property type="match status" value="1"/>
</dbReference>
<name>PNP_OCEIH</name>
<accession>Q8EQT7</accession>
<feature type="chain" id="PRO_0000329743" description="Polyribonucleotide nucleotidyltransferase">
    <location>
        <begin position="1"/>
        <end position="705"/>
    </location>
</feature>
<feature type="domain" description="KH" evidence="1">
    <location>
        <begin position="554"/>
        <end position="613"/>
    </location>
</feature>
<feature type="domain" description="S1 motif" evidence="1">
    <location>
        <begin position="623"/>
        <end position="691"/>
    </location>
</feature>
<feature type="binding site" evidence="1">
    <location>
        <position position="487"/>
    </location>
    <ligand>
        <name>Mg(2+)</name>
        <dbReference type="ChEBI" id="CHEBI:18420"/>
    </ligand>
</feature>
<feature type="binding site" evidence="1">
    <location>
        <position position="493"/>
    </location>
    <ligand>
        <name>Mg(2+)</name>
        <dbReference type="ChEBI" id="CHEBI:18420"/>
    </ligand>
</feature>